<name>AR6P4_RAT</name>
<organism>
    <name type="scientific">Rattus norvegicus</name>
    <name type="common">Rat</name>
    <dbReference type="NCBI Taxonomy" id="10116"/>
    <lineage>
        <taxon>Eukaryota</taxon>
        <taxon>Metazoa</taxon>
        <taxon>Chordata</taxon>
        <taxon>Craniata</taxon>
        <taxon>Vertebrata</taxon>
        <taxon>Euteleostomi</taxon>
        <taxon>Mammalia</taxon>
        <taxon>Eutheria</taxon>
        <taxon>Euarchontoglires</taxon>
        <taxon>Glires</taxon>
        <taxon>Rodentia</taxon>
        <taxon>Myomorpha</taxon>
        <taxon>Muroidea</taxon>
        <taxon>Muridae</taxon>
        <taxon>Murinae</taxon>
        <taxon>Rattus</taxon>
    </lineage>
</organism>
<evidence type="ECO:0000250" key="1"/>
<evidence type="ECO:0000250" key="2">
    <source>
        <dbReference type="UniProtKB" id="Q66PJ3"/>
    </source>
</evidence>
<evidence type="ECO:0000256" key="3">
    <source>
        <dbReference type="SAM" id="MobiDB-lite"/>
    </source>
</evidence>
<evidence type="ECO:0000305" key="4"/>
<evidence type="ECO:0007744" key="5">
    <source>
    </source>
</evidence>
<accession>Q4V8I5</accession>
<accession>Q499T6</accession>
<protein>
    <recommendedName>
        <fullName>ADP-ribosylation factor-like protein 6-interacting protein 4</fullName>
        <shortName>ARL-6-interacting protein 4</shortName>
        <shortName>Aip-4</shortName>
    </recommendedName>
    <alternativeName>
        <fullName>Splicing factor SRrp37</fullName>
    </alternativeName>
</protein>
<sequence>MAHVSSRKRSRSRSRSRGRRGSEKRSKRSSKDSSRNCSTSKSQGHKASSTSGVEERSKHKAQRTSRSSSSSSSSSSSSSSSSTSSSSSSDGRKKRGKHKDKKKRKKKKKRKKKMKRKGKEKAVVVHQAEALPGPSLDQWHRSAGEDNDGPVLTDEQKSRIQAMKPMTKEEWDARQSVIRKVVDPETGRTRLIKGDGEVLEEIVTKERHREINKQATRGDGLAFQMRAGLLP</sequence>
<reference key="1">
    <citation type="journal article" date="2004" name="Genome Res.">
        <title>The status, quality, and expansion of the NIH full-length cDNA project: the Mammalian Gene Collection (MGC).</title>
        <authorList>
            <consortium name="The MGC Project Team"/>
        </authorList>
    </citation>
    <scope>NUCLEOTIDE SEQUENCE [LARGE SCALE MRNA]</scope>
    <source>
        <tissue>Placenta</tissue>
    </source>
</reference>
<reference key="2">
    <citation type="journal article" date="2012" name="Nat. Commun.">
        <title>Quantitative maps of protein phosphorylation sites across 14 different rat organs and tissues.</title>
        <authorList>
            <person name="Lundby A."/>
            <person name="Secher A."/>
            <person name="Lage K."/>
            <person name="Nordsborg N.B."/>
            <person name="Dmytriyev A."/>
            <person name="Lundby C."/>
            <person name="Olsen J.V."/>
        </authorList>
    </citation>
    <scope>PHOSPHORYLATION [LARGE SCALE ANALYSIS] AT SER-142</scope>
    <scope>IDENTIFICATION BY MASS SPECTROMETRY [LARGE SCALE ANALYSIS]</scope>
</reference>
<gene>
    <name type="primary">Arl6ip4</name>
</gene>
<proteinExistence type="evidence at protein level"/>
<dbReference type="EMBL" id="BC097374">
    <property type="protein sequence ID" value="AAH97374.1"/>
    <property type="molecule type" value="mRNA"/>
</dbReference>
<dbReference type="RefSeq" id="NP_001020801.1">
    <property type="nucleotide sequence ID" value="NM_001025630.1"/>
</dbReference>
<dbReference type="STRING" id="10116.ENSRNOP00000001432"/>
<dbReference type="iPTMnet" id="Q4V8I5"/>
<dbReference type="PhosphoSitePlus" id="Q4V8I5"/>
<dbReference type="PaxDb" id="10116-ENSRNOP00000001432"/>
<dbReference type="Ensembl" id="ENSRNOT00000001432.6">
    <property type="protein sequence ID" value="ENSRNOP00000001432.4"/>
    <property type="gene ID" value="ENSRNOG00000001080.6"/>
</dbReference>
<dbReference type="GeneID" id="288656"/>
<dbReference type="KEGG" id="rno:288656"/>
<dbReference type="UCSC" id="RGD:1307657">
    <property type="organism name" value="rat"/>
</dbReference>
<dbReference type="AGR" id="RGD:1307657"/>
<dbReference type="CTD" id="51329"/>
<dbReference type="RGD" id="1307657">
    <property type="gene designation" value="Arl6ip4"/>
</dbReference>
<dbReference type="eggNOG" id="ENOG502RYBZ">
    <property type="taxonomic scope" value="Eukaryota"/>
</dbReference>
<dbReference type="GeneTree" id="ENSGT00390000009670"/>
<dbReference type="HOGENOM" id="CLU_055563_0_0_1"/>
<dbReference type="InParanoid" id="Q4V8I5"/>
<dbReference type="OMA" id="PRVMKPM"/>
<dbReference type="OrthoDB" id="91069at9989"/>
<dbReference type="PhylomeDB" id="Q4V8I5"/>
<dbReference type="TreeFam" id="TF350468"/>
<dbReference type="PRO" id="PR:Q4V8I5"/>
<dbReference type="Proteomes" id="UP000002494">
    <property type="component" value="Chromosome 12"/>
</dbReference>
<dbReference type="Bgee" id="ENSRNOG00000001080">
    <property type="expression patterns" value="Expressed in duodenum and 20 other cell types or tissues"/>
</dbReference>
<dbReference type="GO" id="GO:0016607">
    <property type="term" value="C:nuclear speck"/>
    <property type="evidence" value="ECO:0007669"/>
    <property type="project" value="UniProtKB-SubCell"/>
</dbReference>
<dbReference type="GO" id="GO:0005730">
    <property type="term" value="C:nucleolus"/>
    <property type="evidence" value="ECO:0007669"/>
    <property type="project" value="UniProtKB-SubCell"/>
</dbReference>
<dbReference type="GO" id="GO:0042802">
    <property type="term" value="F:identical protein binding"/>
    <property type="evidence" value="ECO:0000266"/>
    <property type="project" value="RGD"/>
</dbReference>
<dbReference type="GO" id="GO:0006397">
    <property type="term" value="P:mRNA processing"/>
    <property type="evidence" value="ECO:0007669"/>
    <property type="project" value="UniProtKB-KW"/>
</dbReference>
<dbReference type="GO" id="GO:0008380">
    <property type="term" value="P:RNA splicing"/>
    <property type="evidence" value="ECO:0007669"/>
    <property type="project" value="UniProtKB-KW"/>
</dbReference>
<dbReference type="InterPro" id="IPR019532">
    <property type="entry name" value="Nucl_RNA-splicing_assoc_SR-25"/>
</dbReference>
<dbReference type="Pfam" id="PF10500">
    <property type="entry name" value="SR-25"/>
    <property type="match status" value="1"/>
</dbReference>
<feature type="chain" id="PRO_0000312272" description="ADP-ribosylation factor-like protein 6-interacting protein 4">
    <location>
        <begin position="1"/>
        <end position="231"/>
    </location>
</feature>
<feature type="region of interest" description="Disordered" evidence="3">
    <location>
        <begin position="1"/>
        <end position="154"/>
    </location>
</feature>
<feature type="compositionally biased region" description="Basic residues" evidence="3">
    <location>
        <begin position="1"/>
        <end position="19"/>
    </location>
</feature>
<feature type="compositionally biased region" description="Basic and acidic residues" evidence="3">
    <location>
        <begin position="20"/>
        <end position="34"/>
    </location>
</feature>
<feature type="compositionally biased region" description="Low complexity" evidence="3">
    <location>
        <begin position="64"/>
        <end position="89"/>
    </location>
</feature>
<feature type="compositionally biased region" description="Basic residues" evidence="3">
    <location>
        <begin position="92"/>
        <end position="119"/>
    </location>
</feature>
<feature type="modified residue" description="Phosphoserine" evidence="5">
    <location>
        <position position="142"/>
    </location>
</feature>
<feature type="modified residue" description="Phosphoserine" evidence="2">
    <location>
        <position position="176"/>
    </location>
</feature>
<feature type="cross-link" description="Glycyl lysine isopeptide (Lys-Gly) (interchain with G-Cter in SUMO2)" evidence="2">
    <location>
        <position position="193"/>
    </location>
</feature>
<keyword id="KW-1017">Isopeptide bond</keyword>
<keyword id="KW-0507">mRNA processing</keyword>
<keyword id="KW-0508">mRNA splicing</keyword>
<keyword id="KW-0539">Nucleus</keyword>
<keyword id="KW-0597">Phosphoprotein</keyword>
<keyword id="KW-1185">Reference proteome</keyword>
<keyword id="KW-0832">Ubl conjugation</keyword>
<comment type="function">
    <text evidence="1">Involved in modulating alternative pre-mRNA splicing with either 5' distal site activation or preferential use of 3' proximal site.</text>
</comment>
<comment type="subunit">
    <text evidence="1">Interacts with ARL6. Interacts with ZCCHC17. Interacts with SRSF2.</text>
</comment>
<comment type="subcellular location">
    <subcellularLocation>
        <location evidence="1">Nucleus</location>
        <location evidence="1">Nucleolus</location>
    </subcellularLocation>
    <subcellularLocation>
        <location evidence="1">Nucleus speckle</location>
    </subcellularLocation>
</comment>
<comment type="similarity">
    <text evidence="4">Belongs to the ARL6IP4 family.</text>
</comment>